<feature type="chain" id="PRO_0000237093" description="Small ribosomal subunit protein uS10">
    <location>
        <begin position="1"/>
        <end position="103"/>
    </location>
</feature>
<sequence>MQNQRIRIRLKAFDHRLIDQATAEIVETAKRTGAQVRGPIPLPTRKERFTVLISPHVNKDARDQYEIRTHLRLVDIVEPTEKTVDALMRLDLAAGVDVQISLG</sequence>
<gene>
    <name evidence="1" type="primary">rpsJ</name>
    <name type="ordered locus">SBO_3315</name>
</gene>
<evidence type="ECO:0000255" key="1">
    <source>
        <dbReference type="HAMAP-Rule" id="MF_00508"/>
    </source>
</evidence>
<evidence type="ECO:0000305" key="2"/>
<comment type="function">
    <text evidence="1">Involved in the binding of tRNA to the ribosomes.</text>
</comment>
<comment type="subunit">
    <text evidence="1">Part of the 30S ribosomal subunit.</text>
</comment>
<comment type="similarity">
    <text evidence="1">Belongs to the universal ribosomal protein uS10 family.</text>
</comment>
<dbReference type="EMBL" id="CP000036">
    <property type="protein sequence ID" value="ABB67803.1"/>
    <property type="molecule type" value="Genomic_DNA"/>
</dbReference>
<dbReference type="RefSeq" id="WP_001181004.1">
    <property type="nucleotide sequence ID" value="NC_007613.1"/>
</dbReference>
<dbReference type="SMR" id="Q31VV5"/>
<dbReference type="GeneID" id="93778666"/>
<dbReference type="KEGG" id="sbo:SBO_3315"/>
<dbReference type="HOGENOM" id="CLU_122625_1_3_6"/>
<dbReference type="Proteomes" id="UP000007067">
    <property type="component" value="Chromosome"/>
</dbReference>
<dbReference type="GO" id="GO:1990904">
    <property type="term" value="C:ribonucleoprotein complex"/>
    <property type="evidence" value="ECO:0007669"/>
    <property type="project" value="UniProtKB-KW"/>
</dbReference>
<dbReference type="GO" id="GO:0005840">
    <property type="term" value="C:ribosome"/>
    <property type="evidence" value="ECO:0007669"/>
    <property type="project" value="UniProtKB-KW"/>
</dbReference>
<dbReference type="GO" id="GO:0003735">
    <property type="term" value="F:structural constituent of ribosome"/>
    <property type="evidence" value="ECO:0007669"/>
    <property type="project" value="InterPro"/>
</dbReference>
<dbReference type="GO" id="GO:0000049">
    <property type="term" value="F:tRNA binding"/>
    <property type="evidence" value="ECO:0007669"/>
    <property type="project" value="UniProtKB-UniRule"/>
</dbReference>
<dbReference type="GO" id="GO:0006412">
    <property type="term" value="P:translation"/>
    <property type="evidence" value="ECO:0007669"/>
    <property type="project" value="UniProtKB-UniRule"/>
</dbReference>
<dbReference type="FunFam" id="3.30.70.600:FF:000001">
    <property type="entry name" value="30S ribosomal protein S10"/>
    <property type="match status" value="1"/>
</dbReference>
<dbReference type="Gene3D" id="3.30.70.600">
    <property type="entry name" value="Ribosomal protein S10 domain"/>
    <property type="match status" value="1"/>
</dbReference>
<dbReference type="HAMAP" id="MF_00508">
    <property type="entry name" value="Ribosomal_uS10"/>
    <property type="match status" value="1"/>
</dbReference>
<dbReference type="InterPro" id="IPR001848">
    <property type="entry name" value="Ribosomal_uS10"/>
</dbReference>
<dbReference type="InterPro" id="IPR018268">
    <property type="entry name" value="Ribosomal_uS10_CS"/>
</dbReference>
<dbReference type="InterPro" id="IPR027486">
    <property type="entry name" value="Ribosomal_uS10_dom"/>
</dbReference>
<dbReference type="InterPro" id="IPR036838">
    <property type="entry name" value="Ribosomal_uS10_dom_sf"/>
</dbReference>
<dbReference type="NCBIfam" id="NF001861">
    <property type="entry name" value="PRK00596.1"/>
    <property type="match status" value="1"/>
</dbReference>
<dbReference type="NCBIfam" id="TIGR01049">
    <property type="entry name" value="rpsJ_bact"/>
    <property type="match status" value="1"/>
</dbReference>
<dbReference type="PANTHER" id="PTHR11700">
    <property type="entry name" value="30S RIBOSOMAL PROTEIN S10 FAMILY MEMBER"/>
    <property type="match status" value="1"/>
</dbReference>
<dbReference type="Pfam" id="PF00338">
    <property type="entry name" value="Ribosomal_S10"/>
    <property type="match status" value="1"/>
</dbReference>
<dbReference type="PRINTS" id="PR00971">
    <property type="entry name" value="RIBOSOMALS10"/>
</dbReference>
<dbReference type="SMART" id="SM01403">
    <property type="entry name" value="Ribosomal_S10"/>
    <property type="match status" value="1"/>
</dbReference>
<dbReference type="SUPFAM" id="SSF54999">
    <property type="entry name" value="Ribosomal protein S10"/>
    <property type="match status" value="1"/>
</dbReference>
<dbReference type="PROSITE" id="PS00361">
    <property type="entry name" value="RIBOSOMAL_S10"/>
    <property type="match status" value="1"/>
</dbReference>
<organism>
    <name type="scientific">Shigella boydii serotype 4 (strain Sb227)</name>
    <dbReference type="NCBI Taxonomy" id="300268"/>
    <lineage>
        <taxon>Bacteria</taxon>
        <taxon>Pseudomonadati</taxon>
        <taxon>Pseudomonadota</taxon>
        <taxon>Gammaproteobacteria</taxon>
        <taxon>Enterobacterales</taxon>
        <taxon>Enterobacteriaceae</taxon>
        <taxon>Shigella</taxon>
    </lineage>
</organism>
<protein>
    <recommendedName>
        <fullName evidence="1">Small ribosomal subunit protein uS10</fullName>
    </recommendedName>
    <alternativeName>
        <fullName evidence="2">30S ribosomal protein S10</fullName>
    </alternativeName>
</protein>
<proteinExistence type="inferred from homology"/>
<reference key="1">
    <citation type="journal article" date="2005" name="Nucleic Acids Res.">
        <title>Genome dynamics and diversity of Shigella species, the etiologic agents of bacillary dysentery.</title>
        <authorList>
            <person name="Yang F."/>
            <person name="Yang J."/>
            <person name="Zhang X."/>
            <person name="Chen L."/>
            <person name="Jiang Y."/>
            <person name="Yan Y."/>
            <person name="Tang X."/>
            <person name="Wang J."/>
            <person name="Xiong Z."/>
            <person name="Dong J."/>
            <person name="Xue Y."/>
            <person name="Zhu Y."/>
            <person name="Xu X."/>
            <person name="Sun L."/>
            <person name="Chen S."/>
            <person name="Nie H."/>
            <person name="Peng J."/>
            <person name="Xu J."/>
            <person name="Wang Y."/>
            <person name="Yuan Z."/>
            <person name="Wen Y."/>
            <person name="Yao Z."/>
            <person name="Shen Y."/>
            <person name="Qiang B."/>
            <person name="Hou Y."/>
            <person name="Yu J."/>
            <person name="Jin Q."/>
        </authorList>
    </citation>
    <scope>NUCLEOTIDE SEQUENCE [LARGE SCALE GENOMIC DNA]</scope>
    <source>
        <strain>Sb227</strain>
    </source>
</reference>
<name>RS10_SHIBS</name>
<keyword id="KW-0687">Ribonucleoprotein</keyword>
<keyword id="KW-0689">Ribosomal protein</keyword>
<accession>Q31VV5</accession>